<reference key="1">
    <citation type="journal article" date="2004" name="Proc. Natl. Acad. Sci. U.S.A.">
        <title>Genomic plasticity of the causative agent of melioidosis, Burkholderia pseudomallei.</title>
        <authorList>
            <person name="Holden M.T.G."/>
            <person name="Titball R.W."/>
            <person name="Peacock S.J."/>
            <person name="Cerdeno-Tarraga A.-M."/>
            <person name="Atkins T."/>
            <person name="Crossman L.C."/>
            <person name="Pitt T."/>
            <person name="Churcher C."/>
            <person name="Mungall K.L."/>
            <person name="Bentley S.D."/>
            <person name="Sebaihia M."/>
            <person name="Thomson N.R."/>
            <person name="Bason N."/>
            <person name="Beacham I.R."/>
            <person name="Brooks K."/>
            <person name="Brown K.A."/>
            <person name="Brown N.F."/>
            <person name="Challis G.L."/>
            <person name="Cherevach I."/>
            <person name="Chillingworth T."/>
            <person name="Cronin A."/>
            <person name="Crossett B."/>
            <person name="Davis P."/>
            <person name="DeShazer D."/>
            <person name="Feltwell T."/>
            <person name="Fraser A."/>
            <person name="Hance Z."/>
            <person name="Hauser H."/>
            <person name="Holroyd S."/>
            <person name="Jagels K."/>
            <person name="Keith K.E."/>
            <person name="Maddison M."/>
            <person name="Moule S."/>
            <person name="Price C."/>
            <person name="Quail M.A."/>
            <person name="Rabbinowitsch E."/>
            <person name="Rutherford K."/>
            <person name="Sanders M."/>
            <person name="Simmonds M."/>
            <person name="Songsivilai S."/>
            <person name="Stevens K."/>
            <person name="Tumapa S."/>
            <person name="Vesaratchavest M."/>
            <person name="Whitehead S."/>
            <person name="Yeats C."/>
            <person name="Barrell B.G."/>
            <person name="Oyston P.C.F."/>
            <person name="Parkhill J."/>
        </authorList>
    </citation>
    <scope>NUCLEOTIDE SEQUENCE [LARGE SCALE GENOMIC DNA]</scope>
    <source>
        <strain>K96243</strain>
    </source>
</reference>
<dbReference type="EC" id="2.4.2.17" evidence="1"/>
<dbReference type="EMBL" id="BX571965">
    <property type="protein sequence ID" value="CAH37150.1"/>
    <property type="molecule type" value="Genomic_DNA"/>
</dbReference>
<dbReference type="RefSeq" id="WP_004199915.1">
    <property type="nucleotide sequence ID" value="NZ_CP009538.1"/>
</dbReference>
<dbReference type="RefSeq" id="YP_109733.1">
    <property type="nucleotide sequence ID" value="NC_006350.1"/>
</dbReference>
<dbReference type="SMR" id="Q63Q85"/>
<dbReference type="STRING" id="272560.BPSL3140"/>
<dbReference type="GeneID" id="93061757"/>
<dbReference type="KEGG" id="bps:BPSL3140"/>
<dbReference type="PATRIC" id="fig|272560.51.peg.2103"/>
<dbReference type="eggNOG" id="COG0040">
    <property type="taxonomic scope" value="Bacteria"/>
</dbReference>
<dbReference type="UniPathway" id="UPA00031">
    <property type="reaction ID" value="UER00006"/>
</dbReference>
<dbReference type="Proteomes" id="UP000000605">
    <property type="component" value="Chromosome 1"/>
</dbReference>
<dbReference type="GO" id="GO:0005737">
    <property type="term" value="C:cytoplasm"/>
    <property type="evidence" value="ECO:0007669"/>
    <property type="project" value="UniProtKB-SubCell"/>
</dbReference>
<dbReference type="GO" id="GO:0005524">
    <property type="term" value="F:ATP binding"/>
    <property type="evidence" value="ECO:0007669"/>
    <property type="project" value="UniProtKB-KW"/>
</dbReference>
<dbReference type="GO" id="GO:0003879">
    <property type="term" value="F:ATP phosphoribosyltransferase activity"/>
    <property type="evidence" value="ECO:0007669"/>
    <property type="project" value="UniProtKB-UniRule"/>
</dbReference>
<dbReference type="GO" id="GO:0000105">
    <property type="term" value="P:L-histidine biosynthetic process"/>
    <property type="evidence" value="ECO:0007669"/>
    <property type="project" value="UniProtKB-UniRule"/>
</dbReference>
<dbReference type="CDD" id="cd13595">
    <property type="entry name" value="PBP2_HisGs"/>
    <property type="match status" value="1"/>
</dbReference>
<dbReference type="FunFam" id="3.40.190.10:FF:000011">
    <property type="entry name" value="ATP phosphoribosyltransferase"/>
    <property type="match status" value="1"/>
</dbReference>
<dbReference type="Gene3D" id="3.40.190.10">
    <property type="entry name" value="Periplasmic binding protein-like II"/>
    <property type="match status" value="2"/>
</dbReference>
<dbReference type="HAMAP" id="MF_01018">
    <property type="entry name" value="HisG_Short"/>
    <property type="match status" value="1"/>
</dbReference>
<dbReference type="InterPro" id="IPR013820">
    <property type="entry name" value="ATP_PRibTrfase_cat"/>
</dbReference>
<dbReference type="InterPro" id="IPR018198">
    <property type="entry name" value="ATP_PRibTrfase_CS"/>
</dbReference>
<dbReference type="InterPro" id="IPR001348">
    <property type="entry name" value="ATP_PRibTrfase_HisG"/>
</dbReference>
<dbReference type="InterPro" id="IPR024893">
    <property type="entry name" value="ATP_PRibTrfase_HisG_short"/>
</dbReference>
<dbReference type="NCBIfam" id="TIGR00070">
    <property type="entry name" value="hisG"/>
    <property type="match status" value="1"/>
</dbReference>
<dbReference type="PANTHER" id="PTHR21403:SF8">
    <property type="entry name" value="ATP PHOSPHORIBOSYLTRANSFERASE"/>
    <property type="match status" value="1"/>
</dbReference>
<dbReference type="PANTHER" id="PTHR21403">
    <property type="entry name" value="ATP PHOSPHORIBOSYLTRANSFERASE ATP-PRTASE"/>
    <property type="match status" value="1"/>
</dbReference>
<dbReference type="Pfam" id="PF01634">
    <property type="entry name" value="HisG"/>
    <property type="match status" value="1"/>
</dbReference>
<dbReference type="SUPFAM" id="SSF53850">
    <property type="entry name" value="Periplasmic binding protein-like II"/>
    <property type="match status" value="1"/>
</dbReference>
<dbReference type="PROSITE" id="PS01316">
    <property type="entry name" value="ATP_P_PHORIBOSYLTR"/>
    <property type="match status" value="1"/>
</dbReference>
<accession>Q63Q85</accession>
<keyword id="KW-0028">Amino-acid biosynthesis</keyword>
<keyword id="KW-0067">ATP-binding</keyword>
<keyword id="KW-0963">Cytoplasm</keyword>
<keyword id="KW-0328">Glycosyltransferase</keyword>
<keyword id="KW-0368">Histidine biosynthesis</keyword>
<keyword id="KW-0547">Nucleotide-binding</keyword>
<keyword id="KW-1185">Reference proteome</keyword>
<keyword id="KW-0808">Transferase</keyword>
<feature type="chain" id="PRO_0000229310" description="ATP phosphoribosyltransferase">
    <location>
        <begin position="1"/>
        <end position="218"/>
    </location>
</feature>
<name>HIS1_BURPS</name>
<organism>
    <name type="scientific">Burkholderia pseudomallei (strain K96243)</name>
    <dbReference type="NCBI Taxonomy" id="272560"/>
    <lineage>
        <taxon>Bacteria</taxon>
        <taxon>Pseudomonadati</taxon>
        <taxon>Pseudomonadota</taxon>
        <taxon>Betaproteobacteria</taxon>
        <taxon>Burkholderiales</taxon>
        <taxon>Burkholderiaceae</taxon>
        <taxon>Burkholderia</taxon>
        <taxon>pseudomallei group</taxon>
    </lineage>
</organism>
<comment type="function">
    <text evidence="1">Catalyzes the condensation of ATP and 5-phosphoribose 1-diphosphate to form N'-(5'-phosphoribosyl)-ATP (PR-ATP). Has a crucial role in the pathway because the rate of histidine biosynthesis seems to be controlled primarily by regulation of HisG enzymatic activity.</text>
</comment>
<comment type="catalytic activity">
    <reaction evidence="1">
        <text>1-(5-phospho-beta-D-ribosyl)-ATP + diphosphate = 5-phospho-alpha-D-ribose 1-diphosphate + ATP</text>
        <dbReference type="Rhea" id="RHEA:18473"/>
        <dbReference type="ChEBI" id="CHEBI:30616"/>
        <dbReference type="ChEBI" id="CHEBI:33019"/>
        <dbReference type="ChEBI" id="CHEBI:58017"/>
        <dbReference type="ChEBI" id="CHEBI:73183"/>
        <dbReference type="EC" id="2.4.2.17"/>
    </reaction>
</comment>
<comment type="pathway">
    <text evidence="1">Amino-acid biosynthesis; L-histidine biosynthesis; L-histidine from 5-phospho-alpha-D-ribose 1-diphosphate: step 1/9.</text>
</comment>
<comment type="subunit">
    <text evidence="1">Heteromultimer composed of HisG and HisZ subunits.</text>
</comment>
<comment type="subcellular location">
    <subcellularLocation>
        <location evidence="1">Cytoplasm</location>
    </subcellularLocation>
</comment>
<comment type="domain">
    <text>Lacks the C-terminal regulatory region which is replaced by HisZ.</text>
</comment>
<comment type="similarity">
    <text evidence="1">Belongs to the ATP phosphoribosyltransferase family. Short subfamily.</text>
</comment>
<gene>
    <name evidence="1" type="primary">hisG</name>
    <name type="ordered locus">BPSL3140</name>
</gene>
<evidence type="ECO:0000255" key="1">
    <source>
        <dbReference type="HAMAP-Rule" id="MF_01018"/>
    </source>
</evidence>
<protein>
    <recommendedName>
        <fullName evidence="1">ATP phosphoribosyltransferase</fullName>
        <shortName evidence="1">ATP-PRT</shortName>
        <shortName evidence="1">ATP-PRTase</shortName>
        <ecNumber evidence="1">2.4.2.17</ecNumber>
    </recommendedName>
</protein>
<proteinExistence type="inferred from homology"/>
<sequence length="218" mass="23067">MSAPLTLALSKGRIFEETVPLLAAAGVTVAEDPETSRKLILPTTDPNLRVIVVRATDVPTYVEYGAADFGVAGKDVLLEHGGGGLYQPIDLNIARCRMSVAVPAGFDYANAVRQGARLRVATKYVETAREHFAAKGVHVDLIKLYGSMELAPLVGLADAIVDLVSSGGTLKANNLVEVEEIMPISSRLVVNQAALKLKRAALKPFLDAFERASLGSGA</sequence>